<feature type="chain" id="PRO_0000192123" description="Bifunctional purine biosynthesis protein PurH">
    <location>
        <begin position="1"/>
        <end position="492"/>
    </location>
</feature>
<feature type="domain" description="MGS-like" evidence="2">
    <location>
        <begin position="1"/>
        <end position="144"/>
    </location>
</feature>
<keyword id="KW-0378">Hydrolase</keyword>
<keyword id="KW-0511">Multifunctional enzyme</keyword>
<keyword id="KW-0658">Purine biosynthesis</keyword>
<keyword id="KW-0808">Transferase</keyword>
<accession>P67543</accession>
<accession>Q99V24</accession>
<organism>
    <name type="scientific">Staphylococcus aureus (strain Mu50 / ATCC 700699)</name>
    <dbReference type="NCBI Taxonomy" id="158878"/>
    <lineage>
        <taxon>Bacteria</taxon>
        <taxon>Bacillati</taxon>
        <taxon>Bacillota</taxon>
        <taxon>Bacilli</taxon>
        <taxon>Bacillales</taxon>
        <taxon>Staphylococcaceae</taxon>
        <taxon>Staphylococcus</taxon>
    </lineage>
</organism>
<proteinExistence type="inferred from homology"/>
<dbReference type="EC" id="2.1.2.3" evidence="1"/>
<dbReference type="EC" id="3.5.4.10" evidence="1"/>
<dbReference type="EMBL" id="BA000017">
    <property type="protein sequence ID" value="BAB57235.1"/>
    <property type="status" value="ALT_INIT"/>
    <property type="molecule type" value="Genomic_DNA"/>
</dbReference>
<dbReference type="RefSeq" id="WP_000709277.1">
    <property type="nucleotide sequence ID" value="NC_002758.2"/>
</dbReference>
<dbReference type="SMR" id="P67543"/>
<dbReference type="KEGG" id="sav:SAV1073"/>
<dbReference type="HOGENOM" id="CLU_016316_5_2_9"/>
<dbReference type="UniPathway" id="UPA00074">
    <property type="reaction ID" value="UER00133"/>
</dbReference>
<dbReference type="UniPathway" id="UPA00074">
    <property type="reaction ID" value="UER00135"/>
</dbReference>
<dbReference type="Proteomes" id="UP000002481">
    <property type="component" value="Chromosome"/>
</dbReference>
<dbReference type="GO" id="GO:0005829">
    <property type="term" value="C:cytosol"/>
    <property type="evidence" value="ECO:0007669"/>
    <property type="project" value="TreeGrafter"/>
</dbReference>
<dbReference type="GO" id="GO:0003937">
    <property type="term" value="F:IMP cyclohydrolase activity"/>
    <property type="evidence" value="ECO:0007669"/>
    <property type="project" value="UniProtKB-UniRule"/>
</dbReference>
<dbReference type="GO" id="GO:0004643">
    <property type="term" value="F:phosphoribosylaminoimidazolecarboxamide formyltransferase activity"/>
    <property type="evidence" value="ECO:0007669"/>
    <property type="project" value="UniProtKB-UniRule"/>
</dbReference>
<dbReference type="GO" id="GO:0006189">
    <property type="term" value="P:'de novo' IMP biosynthetic process"/>
    <property type="evidence" value="ECO:0007669"/>
    <property type="project" value="UniProtKB-UniRule"/>
</dbReference>
<dbReference type="CDD" id="cd01421">
    <property type="entry name" value="IMPCH"/>
    <property type="match status" value="1"/>
</dbReference>
<dbReference type="FunFam" id="3.40.140.20:FF:000001">
    <property type="entry name" value="Bifunctional purine biosynthesis protein PurH"/>
    <property type="match status" value="1"/>
</dbReference>
<dbReference type="FunFam" id="3.40.140.20:FF:000002">
    <property type="entry name" value="Bifunctional purine biosynthesis protein PurH"/>
    <property type="match status" value="1"/>
</dbReference>
<dbReference type="FunFam" id="3.40.50.1380:FF:000001">
    <property type="entry name" value="Bifunctional purine biosynthesis protein PurH"/>
    <property type="match status" value="1"/>
</dbReference>
<dbReference type="Gene3D" id="3.40.140.20">
    <property type="match status" value="2"/>
</dbReference>
<dbReference type="Gene3D" id="3.40.50.1380">
    <property type="entry name" value="Methylglyoxal synthase-like domain"/>
    <property type="match status" value="1"/>
</dbReference>
<dbReference type="HAMAP" id="MF_00139">
    <property type="entry name" value="PurH"/>
    <property type="match status" value="1"/>
</dbReference>
<dbReference type="InterPro" id="IPR024051">
    <property type="entry name" value="AICAR_Tfase_dup_dom_sf"/>
</dbReference>
<dbReference type="InterPro" id="IPR016193">
    <property type="entry name" value="Cytidine_deaminase-like"/>
</dbReference>
<dbReference type="InterPro" id="IPR011607">
    <property type="entry name" value="MGS-like_dom"/>
</dbReference>
<dbReference type="InterPro" id="IPR036914">
    <property type="entry name" value="MGS-like_dom_sf"/>
</dbReference>
<dbReference type="InterPro" id="IPR002695">
    <property type="entry name" value="PurH-like"/>
</dbReference>
<dbReference type="NCBIfam" id="NF002049">
    <property type="entry name" value="PRK00881.1"/>
    <property type="match status" value="1"/>
</dbReference>
<dbReference type="NCBIfam" id="TIGR00355">
    <property type="entry name" value="purH"/>
    <property type="match status" value="1"/>
</dbReference>
<dbReference type="PANTHER" id="PTHR11692:SF0">
    <property type="entry name" value="BIFUNCTIONAL PURINE BIOSYNTHESIS PROTEIN ATIC"/>
    <property type="match status" value="1"/>
</dbReference>
<dbReference type="PANTHER" id="PTHR11692">
    <property type="entry name" value="BIFUNCTIONAL PURINE BIOSYNTHESIS PROTEIN PURH"/>
    <property type="match status" value="1"/>
</dbReference>
<dbReference type="Pfam" id="PF01808">
    <property type="entry name" value="AICARFT_IMPCHas"/>
    <property type="match status" value="1"/>
</dbReference>
<dbReference type="Pfam" id="PF02142">
    <property type="entry name" value="MGS"/>
    <property type="match status" value="1"/>
</dbReference>
<dbReference type="PIRSF" id="PIRSF000414">
    <property type="entry name" value="AICARFT_IMPCHas"/>
    <property type="match status" value="1"/>
</dbReference>
<dbReference type="SMART" id="SM00798">
    <property type="entry name" value="AICARFT_IMPCHas"/>
    <property type="match status" value="1"/>
</dbReference>
<dbReference type="SMART" id="SM00851">
    <property type="entry name" value="MGS"/>
    <property type="match status" value="1"/>
</dbReference>
<dbReference type="SUPFAM" id="SSF53927">
    <property type="entry name" value="Cytidine deaminase-like"/>
    <property type="match status" value="1"/>
</dbReference>
<dbReference type="SUPFAM" id="SSF52335">
    <property type="entry name" value="Methylglyoxal synthase-like"/>
    <property type="match status" value="1"/>
</dbReference>
<dbReference type="PROSITE" id="PS51855">
    <property type="entry name" value="MGS"/>
    <property type="match status" value="1"/>
</dbReference>
<evidence type="ECO:0000255" key="1">
    <source>
        <dbReference type="HAMAP-Rule" id="MF_00139"/>
    </source>
</evidence>
<evidence type="ECO:0000255" key="2">
    <source>
        <dbReference type="PROSITE-ProRule" id="PRU01202"/>
    </source>
</evidence>
<evidence type="ECO:0000305" key="3"/>
<name>PUR9_STAAM</name>
<sequence length="492" mass="54327">MKKAILSVSNKTGIVEFAKALTQLNYELYSTGGTKRILDEANVPVRSVSDLTHFPEIMDGRVKTLHPAVHGGILADRNKPQHLNELSEQHIDLIDMVVVNLYPFQQTVANPDVTMDEAIENIDIGGPTMLRAAAKNYKHVTTIVHPADYHEVLTRLRNDSLDESYRQSLMIKVFEHTAEYDEAIVRFFKGDKETLRYGENPQQSAYFVRTSNAKHTIAGAKQLHGKQLSYNNIKDADATLALVKKFDTPAAVAVKHMNPCGVGIGDTIEQAFQHAYEADSQSIFGGIVALNRAVTPELAEQLHSIFLEVIIAPKFTDEALDILKQKKNVRLLEIDMTIDSNEEEFVSVSGGYLVQDKDNYVVPKEEMKVVTEVAPTDEQWEAMLLGWKVVPSVKSNAIILSNNKQTVGIGAGQMNRVGAAKIALERAIEINDHVALVSDGFFPMGDTVELAAQHGIKAIIQPGGSIKDQDSIDMANKHGIAMVVTGTRHFKH</sequence>
<protein>
    <recommendedName>
        <fullName evidence="1">Bifunctional purine biosynthesis protein PurH</fullName>
    </recommendedName>
    <domain>
        <recommendedName>
            <fullName evidence="1">Phosphoribosylaminoimidazolecarboxamide formyltransferase</fullName>
            <ecNumber evidence="1">2.1.2.3</ecNumber>
        </recommendedName>
        <alternativeName>
            <fullName evidence="1">AICAR transformylase</fullName>
        </alternativeName>
    </domain>
    <domain>
        <recommendedName>
            <fullName evidence="1">IMP cyclohydrolase</fullName>
            <ecNumber evidence="1">3.5.4.10</ecNumber>
        </recommendedName>
        <alternativeName>
            <fullName evidence="1">ATIC</fullName>
        </alternativeName>
        <alternativeName>
            <fullName evidence="1">IMP synthase</fullName>
        </alternativeName>
        <alternativeName>
            <fullName evidence="1">Inosinicase</fullName>
        </alternativeName>
    </domain>
</protein>
<gene>
    <name evidence="1" type="primary">purH</name>
    <name type="ordered locus">SAV1073</name>
</gene>
<reference key="1">
    <citation type="journal article" date="2001" name="Lancet">
        <title>Whole genome sequencing of meticillin-resistant Staphylococcus aureus.</title>
        <authorList>
            <person name="Kuroda M."/>
            <person name="Ohta T."/>
            <person name="Uchiyama I."/>
            <person name="Baba T."/>
            <person name="Yuzawa H."/>
            <person name="Kobayashi I."/>
            <person name="Cui L."/>
            <person name="Oguchi A."/>
            <person name="Aoki K."/>
            <person name="Nagai Y."/>
            <person name="Lian J.-Q."/>
            <person name="Ito T."/>
            <person name="Kanamori M."/>
            <person name="Matsumaru H."/>
            <person name="Maruyama A."/>
            <person name="Murakami H."/>
            <person name="Hosoyama A."/>
            <person name="Mizutani-Ui Y."/>
            <person name="Takahashi N.K."/>
            <person name="Sawano T."/>
            <person name="Inoue R."/>
            <person name="Kaito C."/>
            <person name="Sekimizu K."/>
            <person name="Hirakawa H."/>
            <person name="Kuhara S."/>
            <person name="Goto S."/>
            <person name="Yabuzaki J."/>
            <person name="Kanehisa M."/>
            <person name="Yamashita A."/>
            <person name="Oshima K."/>
            <person name="Furuya K."/>
            <person name="Yoshino C."/>
            <person name="Shiba T."/>
            <person name="Hattori M."/>
            <person name="Ogasawara N."/>
            <person name="Hayashi H."/>
            <person name="Hiramatsu K."/>
        </authorList>
    </citation>
    <scope>NUCLEOTIDE SEQUENCE [LARGE SCALE GENOMIC DNA]</scope>
    <source>
        <strain>Mu50 / ATCC 700699</strain>
    </source>
</reference>
<comment type="catalytic activity">
    <reaction evidence="1">
        <text>(6R)-10-formyltetrahydrofolate + 5-amino-1-(5-phospho-beta-D-ribosyl)imidazole-4-carboxamide = 5-formamido-1-(5-phospho-D-ribosyl)imidazole-4-carboxamide + (6S)-5,6,7,8-tetrahydrofolate</text>
        <dbReference type="Rhea" id="RHEA:22192"/>
        <dbReference type="ChEBI" id="CHEBI:57453"/>
        <dbReference type="ChEBI" id="CHEBI:58467"/>
        <dbReference type="ChEBI" id="CHEBI:58475"/>
        <dbReference type="ChEBI" id="CHEBI:195366"/>
        <dbReference type="EC" id="2.1.2.3"/>
    </reaction>
</comment>
<comment type="catalytic activity">
    <reaction evidence="1">
        <text>IMP + H2O = 5-formamido-1-(5-phospho-D-ribosyl)imidazole-4-carboxamide</text>
        <dbReference type="Rhea" id="RHEA:18445"/>
        <dbReference type="ChEBI" id="CHEBI:15377"/>
        <dbReference type="ChEBI" id="CHEBI:58053"/>
        <dbReference type="ChEBI" id="CHEBI:58467"/>
        <dbReference type="EC" id="3.5.4.10"/>
    </reaction>
</comment>
<comment type="pathway">
    <text evidence="1">Purine metabolism; IMP biosynthesis via de novo pathway; 5-formamido-1-(5-phospho-D-ribosyl)imidazole-4-carboxamide from 5-amino-1-(5-phospho-D-ribosyl)imidazole-4-carboxamide (10-formyl THF route): step 1/1.</text>
</comment>
<comment type="pathway">
    <text evidence="1">Purine metabolism; IMP biosynthesis via de novo pathway; IMP from 5-formamido-1-(5-phospho-D-ribosyl)imidazole-4-carboxamide: step 1/1.</text>
</comment>
<comment type="domain">
    <text evidence="1">The IMP cyclohydrolase activity resides in the N-terminal region.</text>
</comment>
<comment type="similarity">
    <text evidence="1">Belongs to the PurH family.</text>
</comment>
<comment type="sequence caution" evidence="3">
    <conflict type="erroneous initiation">
        <sequence resource="EMBL-CDS" id="BAB57235"/>
    </conflict>
</comment>